<protein>
    <recommendedName>
        <fullName evidence="1">Photosystem II reaction center protein I</fullName>
        <shortName evidence="1">PSII-I</shortName>
    </recommendedName>
    <alternativeName>
        <fullName evidence="1">PSII 4.8 kDa protein</fullName>
    </alternativeName>
</protein>
<sequence>MLTLKLFVYTVVIFFVSLFIFGFLSNDPGRNPGREE</sequence>
<feature type="chain" id="PRO_0000275784" description="Photosystem II reaction center protein I">
    <location>
        <begin position="1"/>
        <end position="36"/>
    </location>
</feature>
<feature type="transmembrane region" description="Helical" evidence="1">
    <location>
        <begin position="4"/>
        <end position="24"/>
    </location>
</feature>
<proteinExistence type="inferred from homology"/>
<reference key="1">
    <citation type="journal article" date="2007" name="Theor. Appl. Genet.">
        <title>Complete chloroplast genome sequences of Hordeum vulgare, Sorghum bicolor and Agrostis stolonifera, and comparative analyses with other grass genomes.</title>
        <authorList>
            <person name="Saski C."/>
            <person name="Lee S.-B."/>
            <person name="Fjellheim S."/>
            <person name="Guda C."/>
            <person name="Jansen R.K."/>
            <person name="Luo H."/>
            <person name="Tomkins J."/>
            <person name="Rognli O.A."/>
            <person name="Daniell H."/>
            <person name="Clarke J.L."/>
        </authorList>
    </citation>
    <scope>NUCLEOTIDE SEQUENCE [LARGE SCALE GENOMIC DNA]</scope>
    <source>
        <strain>cv. Penn A-4</strain>
    </source>
</reference>
<organism>
    <name type="scientific">Agrostis stolonifera</name>
    <name type="common">Creeping bentgrass</name>
    <dbReference type="NCBI Taxonomy" id="63632"/>
    <lineage>
        <taxon>Eukaryota</taxon>
        <taxon>Viridiplantae</taxon>
        <taxon>Streptophyta</taxon>
        <taxon>Embryophyta</taxon>
        <taxon>Tracheophyta</taxon>
        <taxon>Spermatophyta</taxon>
        <taxon>Magnoliopsida</taxon>
        <taxon>Liliopsida</taxon>
        <taxon>Poales</taxon>
        <taxon>Poaceae</taxon>
        <taxon>BOP clade</taxon>
        <taxon>Pooideae</taxon>
        <taxon>Poodae</taxon>
        <taxon>Poeae</taxon>
        <taxon>Poeae Chloroplast Group 1 (Aveneae type)</taxon>
        <taxon>Agrostidodinae</taxon>
        <taxon>Agrostidinae</taxon>
        <taxon>Agrostis</taxon>
    </lineage>
</organism>
<comment type="function">
    <text evidence="1">One of the components of the core complex of photosystem II (PSII), required for its stability and/or assembly. PSII is a light-driven water:plastoquinone oxidoreductase that uses light energy to abstract electrons from H(2)O, generating O(2) and a proton gradient subsequently used for ATP formation. It consists of a core antenna complex that captures photons, and an electron transfer chain that converts photonic excitation into a charge separation.</text>
</comment>
<comment type="subunit">
    <text evidence="1">PSII is composed of 1 copy each of membrane proteins PsbA, PsbB, PsbC, PsbD, PsbE, PsbF, PsbH, PsbI, PsbJ, PsbK, PsbL, PsbM, PsbT, PsbX, PsbY, PsbZ, Psb30/Ycf12, at least 3 peripheral proteins of the oxygen-evolving complex and a large number of cofactors. It forms dimeric complexes.</text>
</comment>
<comment type="subcellular location">
    <subcellularLocation>
        <location evidence="1">Plastid</location>
        <location evidence="1">Chloroplast thylakoid membrane</location>
        <topology evidence="1">Single-pass membrane protein</topology>
    </subcellularLocation>
</comment>
<comment type="similarity">
    <text evidence="1">Belongs to the PsbI family.</text>
</comment>
<dbReference type="EMBL" id="EF115543">
    <property type="protein sequence ID" value="ABK79564.1"/>
    <property type="molecule type" value="Genomic_DNA"/>
</dbReference>
<dbReference type="RefSeq" id="YP_874720.1">
    <property type="nucleotide sequence ID" value="NC_008591.1"/>
</dbReference>
<dbReference type="SMR" id="A1E9Z2"/>
<dbReference type="GeneID" id="4524975"/>
<dbReference type="GO" id="GO:0009535">
    <property type="term" value="C:chloroplast thylakoid membrane"/>
    <property type="evidence" value="ECO:0007669"/>
    <property type="project" value="UniProtKB-SubCell"/>
</dbReference>
<dbReference type="GO" id="GO:0009539">
    <property type="term" value="C:photosystem II reaction center"/>
    <property type="evidence" value="ECO:0007669"/>
    <property type="project" value="InterPro"/>
</dbReference>
<dbReference type="GO" id="GO:0015979">
    <property type="term" value="P:photosynthesis"/>
    <property type="evidence" value="ECO:0007669"/>
    <property type="project" value="UniProtKB-UniRule"/>
</dbReference>
<dbReference type="HAMAP" id="MF_01316">
    <property type="entry name" value="PSII_PsbI"/>
    <property type="match status" value="1"/>
</dbReference>
<dbReference type="InterPro" id="IPR003686">
    <property type="entry name" value="PSII_PsbI"/>
</dbReference>
<dbReference type="InterPro" id="IPR037271">
    <property type="entry name" value="PSII_PsbI_sf"/>
</dbReference>
<dbReference type="NCBIfam" id="NF002735">
    <property type="entry name" value="PRK02655.1"/>
    <property type="match status" value="1"/>
</dbReference>
<dbReference type="PANTHER" id="PTHR35772">
    <property type="entry name" value="PHOTOSYSTEM II REACTION CENTER PROTEIN I"/>
    <property type="match status" value="1"/>
</dbReference>
<dbReference type="PANTHER" id="PTHR35772:SF1">
    <property type="entry name" value="PHOTOSYSTEM II REACTION CENTER PROTEIN I"/>
    <property type="match status" value="1"/>
</dbReference>
<dbReference type="Pfam" id="PF02532">
    <property type="entry name" value="PsbI"/>
    <property type="match status" value="1"/>
</dbReference>
<dbReference type="SUPFAM" id="SSF161041">
    <property type="entry name" value="Photosystem II reaction center protein I, PsbI"/>
    <property type="match status" value="1"/>
</dbReference>
<accession>A1E9Z2</accession>
<name>PSBI_AGRST</name>
<geneLocation type="chloroplast"/>
<gene>
    <name evidence="1" type="primary">psbI</name>
</gene>
<keyword id="KW-0150">Chloroplast</keyword>
<keyword id="KW-0472">Membrane</keyword>
<keyword id="KW-0602">Photosynthesis</keyword>
<keyword id="KW-0604">Photosystem II</keyword>
<keyword id="KW-0934">Plastid</keyword>
<keyword id="KW-0674">Reaction center</keyword>
<keyword id="KW-0793">Thylakoid</keyword>
<keyword id="KW-0812">Transmembrane</keyword>
<keyword id="KW-1133">Transmembrane helix</keyword>
<evidence type="ECO:0000255" key="1">
    <source>
        <dbReference type="HAMAP-Rule" id="MF_01316"/>
    </source>
</evidence>